<keyword id="KW-0328">Glycosyltransferase</keyword>
<keyword id="KW-0441">Lipid A biosynthesis</keyword>
<keyword id="KW-0444">Lipid biosynthesis</keyword>
<keyword id="KW-0443">Lipid metabolism</keyword>
<keyword id="KW-0808">Transferase</keyword>
<proteinExistence type="inferred from homology"/>
<reference key="1">
    <citation type="submission" date="2008-08" db="EMBL/GenBank/DDBJ databases">
        <title>Complete sequence of Anaeromyxobacter sp. K.</title>
        <authorList>
            <consortium name="US DOE Joint Genome Institute"/>
            <person name="Lucas S."/>
            <person name="Copeland A."/>
            <person name="Lapidus A."/>
            <person name="Glavina del Rio T."/>
            <person name="Dalin E."/>
            <person name="Tice H."/>
            <person name="Bruce D."/>
            <person name="Goodwin L."/>
            <person name="Pitluck S."/>
            <person name="Saunders E."/>
            <person name="Brettin T."/>
            <person name="Detter J.C."/>
            <person name="Han C."/>
            <person name="Larimer F."/>
            <person name="Land M."/>
            <person name="Hauser L."/>
            <person name="Kyrpides N."/>
            <person name="Ovchinnikiva G."/>
            <person name="Beliaev A."/>
        </authorList>
    </citation>
    <scope>NUCLEOTIDE SEQUENCE [LARGE SCALE GENOMIC DNA]</scope>
    <source>
        <strain>K</strain>
    </source>
</reference>
<comment type="function">
    <text evidence="1">Condensation of UDP-2,3-diacylglucosamine and 2,3-diacylglucosamine-1-phosphate to form lipid A disaccharide, a precursor of lipid A, a phosphorylated glycolipid that anchors the lipopolysaccharide to the outer membrane of the cell.</text>
</comment>
<comment type="catalytic activity">
    <reaction evidence="1">
        <text>a lipid X + a UDP-2-N,3-O-bis[(3R)-3-hydroxyacyl]-alpha-D-glucosamine = a lipid A disaccharide + UDP + H(+)</text>
        <dbReference type="Rhea" id="RHEA:67828"/>
        <dbReference type="ChEBI" id="CHEBI:15378"/>
        <dbReference type="ChEBI" id="CHEBI:58223"/>
        <dbReference type="ChEBI" id="CHEBI:137748"/>
        <dbReference type="ChEBI" id="CHEBI:176338"/>
        <dbReference type="ChEBI" id="CHEBI:176343"/>
        <dbReference type="EC" id="2.4.1.182"/>
    </reaction>
</comment>
<comment type="pathway">
    <text evidence="1">Bacterial outer membrane biogenesis; LPS lipid A biosynthesis.</text>
</comment>
<comment type="similarity">
    <text evidence="1">Belongs to the LpxB family.</text>
</comment>
<protein>
    <recommendedName>
        <fullName evidence="1">Lipid-A-disaccharide synthase</fullName>
        <ecNumber evidence="1">2.4.1.182</ecNumber>
    </recommendedName>
</protein>
<organism>
    <name type="scientific">Anaeromyxobacter sp. (strain K)</name>
    <dbReference type="NCBI Taxonomy" id="447217"/>
    <lineage>
        <taxon>Bacteria</taxon>
        <taxon>Pseudomonadati</taxon>
        <taxon>Myxococcota</taxon>
        <taxon>Myxococcia</taxon>
        <taxon>Myxococcales</taxon>
        <taxon>Cystobacterineae</taxon>
        <taxon>Anaeromyxobacteraceae</taxon>
        <taxon>Anaeromyxobacter</taxon>
    </lineage>
</organism>
<evidence type="ECO:0000255" key="1">
    <source>
        <dbReference type="HAMAP-Rule" id="MF_00392"/>
    </source>
</evidence>
<accession>B4UHR6</accession>
<name>LPXB_ANASK</name>
<dbReference type="EC" id="2.4.1.182" evidence="1"/>
<dbReference type="EMBL" id="CP001131">
    <property type="protein sequence ID" value="ACG73936.1"/>
    <property type="molecule type" value="Genomic_DNA"/>
</dbReference>
<dbReference type="RefSeq" id="WP_012526716.1">
    <property type="nucleotide sequence ID" value="NC_011145.1"/>
</dbReference>
<dbReference type="SMR" id="B4UHR6"/>
<dbReference type="CAZy" id="GT19">
    <property type="family name" value="Glycosyltransferase Family 19"/>
</dbReference>
<dbReference type="KEGG" id="ank:AnaeK_2711"/>
<dbReference type="HOGENOM" id="CLU_036577_3_0_7"/>
<dbReference type="OrthoDB" id="9801642at2"/>
<dbReference type="UniPathway" id="UPA00973"/>
<dbReference type="Proteomes" id="UP000001871">
    <property type="component" value="Chromosome"/>
</dbReference>
<dbReference type="GO" id="GO:0016020">
    <property type="term" value="C:membrane"/>
    <property type="evidence" value="ECO:0007669"/>
    <property type="project" value="GOC"/>
</dbReference>
<dbReference type="GO" id="GO:0008915">
    <property type="term" value="F:lipid-A-disaccharide synthase activity"/>
    <property type="evidence" value="ECO:0007669"/>
    <property type="project" value="UniProtKB-UniRule"/>
</dbReference>
<dbReference type="GO" id="GO:0005543">
    <property type="term" value="F:phospholipid binding"/>
    <property type="evidence" value="ECO:0007669"/>
    <property type="project" value="TreeGrafter"/>
</dbReference>
<dbReference type="GO" id="GO:0009245">
    <property type="term" value="P:lipid A biosynthetic process"/>
    <property type="evidence" value="ECO:0007669"/>
    <property type="project" value="UniProtKB-UniRule"/>
</dbReference>
<dbReference type="HAMAP" id="MF_00392">
    <property type="entry name" value="LpxB"/>
    <property type="match status" value="1"/>
</dbReference>
<dbReference type="InterPro" id="IPR003835">
    <property type="entry name" value="Glyco_trans_19"/>
</dbReference>
<dbReference type="NCBIfam" id="TIGR00215">
    <property type="entry name" value="lpxB"/>
    <property type="match status" value="1"/>
</dbReference>
<dbReference type="PANTHER" id="PTHR30372">
    <property type="entry name" value="LIPID-A-DISACCHARIDE SYNTHASE"/>
    <property type="match status" value="1"/>
</dbReference>
<dbReference type="PANTHER" id="PTHR30372:SF4">
    <property type="entry name" value="LIPID-A-DISACCHARIDE SYNTHASE, MITOCHONDRIAL-RELATED"/>
    <property type="match status" value="1"/>
</dbReference>
<dbReference type="Pfam" id="PF02684">
    <property type="entry name" value="LpxB"/>
    <property type="match status" value="1"/>
</dbReference>
<dbReference type="SUPFAM" id="SSF53756">
    <property type="entry name" value="UDP-Glycosyltransferase/glycogen phosphorylase"/>
    <property type="match status" value="1"/>
</dbReference>
<gene>
    <name evidence="1" type="primary">lpxB</name>
    <name type="ordered locus">AnaeK_2711</name>
</gene>
<sequence length="383" mass="41544">MLYSPRLTDQILIVAGEASADLHAARTLHELQRLRPGITAFGVGGPRLREAGLEALAPAEDISVMGLAEVLPRIPRILGILRMLGRAAAERRPRAALLVDLPDFNLRLAARLKKLGIPVVYYVSPTIWAWRQGRAKKIARVVDRMLCILPFEERFYEGTGVSARFVGHPFAERPPPGPAEAYRSALGLPASRTTIAMVPGSRPSELKRLLPPMLQAAERLRAAHPDAQFVVPVAPTLDRAALEPYLAAHRTLEVRLVDGRTEEVVGASDAALVKSGTSTLEAGLMLRPMVVVYKLSWLSYAVARMLVKIAHVALVNILAGRGIVPELLQGDASPERMAAEVEHLLGDRAAREAQIAALREVRASLGEPGAPLRVAEEVLGVMR</sequence>
<feature type="chain" id="PRO_1000191461" description="Lipid-A-disaccharide synthase">
    <location>
        <begin position="1"/>
        <end position="383"/>
    </location>
</feature>